<feature type="chain" id="PRO_0000101807" description="Disintegrin barbourin" evidence="4">
    <location>
        <begin position="1"/>
        <end position="73"/>
    </location>
</feature>
<feature type="domain" description="Disintegrin" evidence="3">
    <location>
        <begin position="1"/>
        <end position="73"/>
    </location>
</feature>
<feature type="short sequence motif" description="Cell attachment site; atypical (KGD)">
    <location>
        <begin position="51"/>
        <end position="53"/>
    </location>
</feature>
<feature type="disulfide bond" evidence="2">
    <location>
        <begin position="6"/>
        <end position="21"/>
    </location>
</feature>
<feature type="disulfide bond" evidence="2">
    <location>
        <begin position="8"/>
        <end position="16"/>
    </location>
</feature>
<feature type="disulfide bond" evidence="2">
    <location>
        <begin position="15"/>
        <end position="38"/>
    </location>
</feature>
<feature type="disulfide bond" evidence="2">
    <location>
        <begin position="29"/>
        <end position="35"/>
    </location>
</feature>
<feature type="disulfide bond" evidence="2">
    <location>
        <begin position="34"/>
        <end position="59"/>
    </location>
</feature>
<feature type="disulfide bond" evidence="2 3">
    <location>
        <begin position="47"/>
        <end position="66"/>
    </location>
</feature>
<evidence type="ECO:0000250" key="1"/>
<evidence type="ECO:0000250" key="2">
    <source>
        <dbReference type="UniProtKB" id="Q0NZX5"/>
    </source>
</evidence>
<evidence type="ECO:0000255" key="3">
    <source>
        <dbReference type="PROSITE-ProRule" id="PRU00068"/>
    </source>
</evidence>
<evidence type="ECO:0000269" key="4">
    <source>
    </source>
</evidence>
<evidence type="ECO:0000303" key="5">
    <source>
    </source>
</evidence>
<evidence type="ECO:0000305" key="6"/>
<evidence type="ECO:0000305" key="7">
    <source>
    </source>
</evidence>
<evidence type="ECO:0000305" key="8">
    <source>
    </source>
</evidence>
<accession>P22827</accession>
<name>VM2I_SISMB</name>
<reference key="1">
    <citation type="journal article" date="1991" name="J. Biol. Chem.">
        <title>Barbourin. A GPIIb-IIIa-specific integrin antagonist from the venom of Sistrurus m. barbouri.</title>
        <authorList>
            <person name="Scarborough R.M."/>
            <person name="Rose J.W."/>
            <person name="Hsu M.A."/>
            <person name="Phillips D.R."/>
            <person name="Fried V.A."/>
            <person name="Campbell A.M."/>
            <person name="Nannizzi L."/>
            <person name="Charo I.F."/>
        </authorList>
    </citation>
    <scope>PROTEIN SEQUENCE</scope>
    <scope>SUBCELLULAR LOCATION</scope>
    <source>
        <tissue>Venom</tissue>
    </source>
</reference>
<reference key="2">
    <citation type="journal article" date="2012" name="Toxicon">
        <title>From snake venom toxins to therapeutics - Cardiovascular examples.</title>
        <authorList>
            <person name="Koh C.Y."/>
            <person name="Kini R.M."/>
        </authorList>
    </citation>
    <scope>REVIEW</scope>
</reference>
<sequence>EAGEECDCGSPENPCCDAATCKLRPGAQCADGLCCDQCRFMKKGTVCRVAKGDWNDDTCTGQSADCPRNGLYG</sequence>
<dbReference type="PIR" id="A40003">
    <property type="entry name" value="A40003"/>
</dbReference>
<dbReference type="SMR" id="P22827"/>
<dbReference type="GO" id="GO:0005576">
    <property type="term" value="C:extracellular region"/>
    <property type="evidence" value="ECO:0007669"/>
    <property type="project" value="UniProtKB-SubCell"/>
</dbReference>
<dbReference type="GO" id="GO:0005886">
    <property type="term" value="C:plasma membrane"/>
    <property type="evidence" value="ECO:0007669"/>
    <property type="project" value="TreeGrafter"/>
</dbReference>
<dbReference type="GO" id="GO:0090729">
    <property type="term" value="F:toxin activity"/>
    <property type="evidence" value="ECO:0007669"/>
    <property type="project" value="UniProtKB-KW"/>
</dbReference>
<dbReference type="FunFam" id="4.10.70.10:FF:000005">
    <property type="entry name" value="Zinc metalloproteinase/disintegrin"/>
    <property type="match status" value="1"/>
</dbReference>
<dbReference type="Gene3D" id="4.10.70.10">
    <property type="entry name" value="Disintegrin domain"/>
    <property type="match status" value="1"/>
</dbReference>
<dbReference type="InterPro" id="IPR018358">
    <property type="entry name" value="Disintegrin_CS"/>
</dbReference>
<dbReference type="InterPro" id="IPR001762">
    <property type="entry name" value="Disintegrin_dom"/>
</dbReference>
<dbReference type="InterPro" id="IPR036436">
    <property type="entry name" value="Disintegrin_dom_sf"/>
</dbReference>
<dbReference type="PANTHER" id="PTHR11905">
    <property type="entry name" value="ADAM A DISINTEGRIN AND METALLOPROTEASE DOMAIN"/>
    <property type="match status" value="1"/>
</dbReference>
<dbReference type="PANTHER" id="PTHR11905:SF32">
    <property type="entry name" value="DISINTEGRIN AND METALLOPROTEINASE DOMAIN-CONTAINING PROTEIN 28"/>
    <property type="match status" value="1"/>
</dbReference>
<dbReference type="Pfam" id="PF00200">
    <property type="entry name" value="Disintegrin"/>
    <property type="match status" value="1"/>
</dbReference>
<dbReference type="PRINTS" id="PR00289">
    <property type="entry name" value="DISINTEGRIN"/>
</dbReference>
<dbReference type="SMART" id="SM00050">
    <property type="entry name" value="DISIN"/>
    <property type="match status" value="1"/>
</dbReference>
<dbReference type="SUPFAM" id="SSF57552">
    <property type="entry name" value="Blood coagulation inhibitor (disintegrin)"/>
    <property type="match status" value="1"/>
</dbReference>
<dbReference type="PROSITE" id="PS00427">
    <property type="entry name" value="DISINTEGRIN_1"/>
    <property type="match status" value="1"/>
</dbReference>
<dbReference type="PROSITE" id="PS50214">
    <property type="entry name" value="DISINTEGRIN_2"/>
    <property type="match status" value="1"/>
</dbReference>
<protein>
    <recommendedName>
        <fullName evidence="5">Disintegrin barbourin</fullName>
    </recommendedName>
    <alternativeName>
        <fullName>Platelet aggregation activation inhibitor</fullName>
    </alternativeName>
</protein>
<keyword id="KW-1217">Cell adhesion impairing toxin</keyword>
<keyword id="KW-0903">Direct protein sequencing</keyword>
<keyword id="KW-1015">Disulfide bond</keyword>
<keyword id="KW-1199">Hemostasis impairing toxin</keyword>
<keyword id="KW-0582">Pharmaceutical</keyword>
<keyword id="KW-1201">Platelet aggregation inhibiting toxin</keyword>
<keyword id="KW-0964">Secreted</keyword>
<keyword id="KW-0800">Toxin</keyword>
<comment type="function">
    <text>Inhibitor of ligand binding to the integrins alpha-IIb/beta-3 (ITGA2B/ITGB3). Competition with fibrinogen for the RGD recognition sites on the alpha-IIb/beta-3 integrin results in the inhibition of platelet aggregation induced by ADP, thrombin, platelet-activating factor and collagen.</text>
</comment>
<comment type="subunit">
    <text evidence="1">Monomer.</text>
</comment>
<comment type="subcellular location">
    <subcellularLocation>
        <location evidence="4">Secreted</location>
    </subcellularLocation>
</comment>
<comment type="tissue specificity">
    <text evidence="7">Expressed by the venom gland.</text>
</comment>
<comment type="pharmaceutical">
    <text evidence="8">This peptide has served as a model to produce eptifibatide (Integrilin), a cyclic heptapeptide available in the market as antiplatelet agent.</text>
</comment>
<comment type="miscellaneous">
    <text>The disintegrin belongs to the medium disintegrin subfamily.</text>
</comment>
<comment type="similarity">
    <text evidence="6">Belongs to the venom metalloproteinase (M12B) family. P-II subfamily. P-IIa sub-subfamily.</text>
</comment>
<proteinExistence type="evidence at protein level"/>
<organism>
    <name type="scientific">Sistrurus miliarius barbouri</name>
    <name type="common">Dusky pigmy rattlesnake</name>
    <name type="synonym">Sistrurus barbouri</name>
    <dbReference type="NCBI Taxonomy" id="8759"/>
    <lineage>
        <taxon>Eukaryota</taxon>
        <taxon>Metazoa</taxon>
        <taxon>Chordata</taxon>
        <taxon>Craniata</taxon>
        <taxon>Vertebrata</taxon>
        <taxon>Euteleostomi</taxon>
        <taxon>Lepidosauria</taxon>
        <taxon>Squamata</taxon>
        <taxon>Bifurcata</taxon>
        <taxon>Unidentata</taxon>
        <taxon>Episquamata</taxon>
        <taxon>Toxicofera</taxon>
        <taxon>Serpentes</taxon>
        <taxon>Colubroidea</taxon>
        <taxon>Viperidae</taxon>
        <taxon>Crotalinae</taxon>
        <taxon>Sistrurus</taxon>
    </lineage>
</organism>